<comment type="function">
    <text evidence="1">Key enzyme in the regulation of glycerol uptake and metabolism. Catalyzes the phosphorylation of glycerol to yield sn-glycerol 3-phosphate.</text>
</comment>
<comment type="catalytic activity">
    <reaction evidence="1">
        <text>glycerol + ATP = sn-glycerol 3-phosphate + ADP + H(+)</text>
        <dbReference type="Rhea" id="RHEA:21644"/>
        <dbReference type="ChEBI" id="CHEBI:15378"/>
        <dbReference type="ChEBI" id="CHEBI:17754"/>
        <dbReference type="ChEBI" id="CHEBI:30616"/>
        <dbReference type="ChEBI" id="CHEBI:57597"/>
        <dbReference type="ChEBI" id="CHEBI:456216"/>
        <dbReference type="EC" id="2.7.1.30"/>
    </reaction>
</comment>
<comment type="activity regulation">
    <text evidence="1">Activated by phosphorylation and inhibited by fructose 1,6-bisphosphate (FBP).</text>
</comment>
<comment type="pathway">
    <text evidence="1">Polyol metabolism; glycerol degradation via glycerol kinase pathway; sn-glycerol 3-phosphate from glycerol: step 1/1.</text>
</comment>
<comment type="subunit">
    <text evidence="1">Homotetramer and homodimer (in equilibrium).</text>
</comment>
<comment type="PTM">
    <text evidence="1">The phosphoenolpyruvate-dependent sugar phosphotransferase system (PTS), including enzyme I, and histidine-containing protein (HPr) are required for the phosphorylation, which leads to the activation of the enzyme.</text>
</comment>
<comment type="similarity">
    <text evidence="1">Belongs to the FGGY kinase family.</text>
</comment>
<dbReference type="EC" id="2.7.1.30" evidence="1"/>
<dbReference type="EMBL" id="CP001033">
    <property type="protein sequence ID" value="ACB91406.1"/>
    <property type="molecule type" value="Genomic_DNA"/>
</dbReference>
<dbReference type="RefSeq" id="WP_000076776.1">
    <property type="nucleotide sequence ID" value="NC_010582.1"/>
</dbReference>
<dbReference type="SMR" id="B2INK5"/>
<dbReference type="KEGG" id="spw:SPCG_2154"/>
<dbReference type="HOGENOM" id="CLU_009281_2_3_9"/>
<dbReference type="UniPathway" id="UPA00618">
    <property type="reaction ID" value="UER00672"/>
</dbReference>
<dbReference type="GO" id="GO:0005829">
    <property type="term" value="C:cytosol"/>
    <property type="evidence" value="ECO:0007669"/>
    <property type="project" value="TreeGrafter"/>
</dbReference>
<dbReference type="GO" id="GO:0005524">
    <property type="term" value="F:ATP binding"/>
    <property type="evidence" value="ECO:0007669"/>
    <property type="project" value="UniProtKB-UniRule"/>
</dbReference>
<dbReference type="GO" id="GO:0004370">
    <property type="term" value="F:glycerol kinase activity"/>
    <property type="evidence" value="ECO:0000250"/>
    <property type="project" value="UniProtKB"/>
</dbReference>
<dbReference type="GO" id="GO:0019563">
    <property type="term" value="P:glycerol catabolic process"/>
    <property type="evidence" value="ECO:0007669"/>
    <property type="project" value="UniProtKB-UniRule"/>
</dbReference>
<dbReference type="GO" id="GO:0006071">
    <property type="term" value="P:glycerol metabolic process"/>
    <property type="evidence" value="ECO:0000250"/>
    <property type="project" value="UniProtKB"/>
</dbReference>
<dbReference type="GO" id="GO:0006072">
    <property type="term" value="P:glycerol-3-phosphate metabolic process"/>
    <property type="evidence" value="ECO:0007669"/>
    <property type="project" value="InterPro"/>
</dbReference>
<dbReference type="CDD" id="cd07786">
    <property type="entry name" value="FGGY_EcGK_like"/>
    <property type="match status" value="1"/>
</dbReference>
<dbReference type="FunFam" id="3.30.420.40:FF:000007">
    <property type="entry name" value="Glycerol kinase"/>
    <property type="match status" value="1"/>
</dbReference>
<dbReference type="FunFam" id="3.30.420.40:FF:000008">
    <property type="entry name" value="Glycerol kinase"/>
    <property type="match status" value="1"/>
</dbReference>
<dbReference type="Gene3D" id="3.30.420.40">
    <property type="match status" value="2"/>
</dbReference>
<dbReference type="HAMAP" id="MF_00186">
    <property type="entry name" value="Glycerol_kin"/>
    <property type="match status" value="1"/>
</dbReference>
<dbReference type="InterPro" id="IPR043129">
    <property type="entry name" value="ATPase_NBD"/>
</dbReference>
<dbReference type="InterPro" id="IPR000577">
    <property type="entry name" value="Carb_kinase_FGGY"/>
</dbReference>
<dbReference type="InterPro" id="IPR018483">
    <property type="entry name" value="Carb_kinase_FGGY_CS"/>
</dbReference>
<dbReference type="InterPro" id="IPR018485">
    <property type="entry name" value="FGGY_C"/>
</dbReference>
<dbReference type="InterPro" id="IPR018484">
    <property type="entry name" value="FGGY_N"/>
</dbReference>
<dbReference type="InterPro" id="IPR005999">
    <property type="entry name" value="Glycerol_kin"/>
</dbReference>
<dbReference type="NCBIfam" id="TIGR01311">
    <property type="entry name" value="glycerol_kin"/>
    <property type="match status" value="1"/>
</dbReference>
<dbReference type="NCBIfam" id="NF000756">
    <property type="entry name" value="PRK00047.1"/>
    <property type="match status" value="1"/>
</dbReference>
<dbReference type="PANTHER" id="PTHR10196:SF69">
    <property type="entry name" value="GLYCEROL KINASE"/>
    <property type="match status" value="1"/>
</dbReference>
<dbReference type="PANTHER" id="PTHR10196">
    <property type="entry name" value="SUGAR KINASE"/>
    <property type="match status" value="1"/>
</dbReference>
<dbReference type="Pfam" id="PF02782">
    <property type="entry name" value="FGGY_C"/>
    <property type="match status" value="1"/>
</dbReference>
<dbReference type="Pfam" id="PF00370">
    <property type="entry name" value="FGGY_N"/>
    <property type="match status" value="1"/>
</dbReference>
<dbReference type="PIRSF" id="PIRSF000538">
    <property type="entry name" value="GlpK"/>
    <property type="match status" value="1"/>
</dbReference>
<dbReference type="SUPFAM" id="SSF53067">
    <property type="entry name" value="Actin-like ATPase domain"/>
    <property type="match status" value="2"/>
</dbReference>
<dbReference type="PROSITE" id="PS00933">
    <property type="entry name" value="FGGY_KINASES_1"/>
    <property type="match status" value="1"/>
</dbReference>
<dbReference type="PROSITE" id="PS00445">
    <property type="entry name" value="FGGY_KINASES_2"/>
    <property type="match status" value="1"/>
</dbReference>
<proteinExistence type="inferred from homology"/>
<protein>
    <recommendedName>
        <fullName evidence="1">Glycerol kinase</fullName>
        <ecNumber evidence="1">2.7.1.30</ecNumber>
    </recommendedName>
    <alternativeName>
        <fullName evidence="1">ATP:glycerol 3-phosphotransferase</fullName>
    </alternativeName>
    <alternativeName>
        <fullName evidence="1">Glycerokinase</fullName>
        <shortName evidence="1">GK</shortName>
    </alternativeName>
</protein>
<evidence type="ECO:0000255" key="1">
    <source>
        <dbReference type="HAMAP-Rule" id="MF_00186"/>
    </source>
</evidence>
<gene>
    <name evidence="1" type="primary">glpK</name>
    <name type="ordered locus">SPCG_2154</name>
</gene>
<organism>
    <name type="scientific">Streptococcus pneumoniae (strain CGSP14)</name>
    <dbReference type="NCBI Taxonomy" id="516950"/>
    <lineage>
        <taxon>Bacteria</taxon>
        <taxon>Bacillati</taxon>
        <taxon>Bacillota</taxon>
        <taxon>Bacilli</taxon>
        <taxon>Lactobacillales</taxon>
        <taxon>Streptococcaceae</taxon>
        <taxon>Streptococcus</taxon>
    </lineage>
</organism>
<keyword id="KW-0067">ATP-binding</keyword>
<keyword id="KW-0319">Glycerol metabolism</keyword>
<keyword id="KW-0418">Kinase</keyword>
<keyword id="KW-0547">Nucleotide-binding</keyword>
<keyword id="KW-0597">Phosphoprotein</keyword>
<keyword id="KW-0808">Transferase</keyword>
<feature type="chain" id="PRO_1000098766" description="Glycerol kinase">
    <location>
        <begin position="1"/>
        <end position="502"/>
    </location>
</feature>
<feature type="binding site" evidence="1">
    <location>
        <position position="14"/>
    </location>
    <ligand>
        <name>ADP</name>
        <dbReference type="ChEBI" id="CHEBI:456216"/>
    </ligand>
</feature>
<feature type="binding site" evidence="1">
    <location>
        <position position="14"/>
    </location>
    <ligand>
        <name>ATP</name>
        <dbReference type="ChEBI" id="CHEBI:30616"/>
    </ligand>
</feature>
<feature type="binding site" evidence="1">
    <location>
        <position position="14"/>
    </location>
    <ligand>
        <name>sn-glycerol 3-phosphate</name>
        <dbReference type="ChEBI" id="CHEBI:57597"/>
    </ligand>
</feature>
<feature type="binding site" evidence="1">
    <location>
        <position position="15"/>
    </location>
    <ligand>
        <name>ATP</name>
        <dbReference type="ChEBI" id="CHEBI:30616"/>
    </ligand>
</feature>
<feature type="binding site" evidence="1">
    <location>
        <position position="16"/>
    </location>
    <ligand>
        <name>ATP</name>
        <dbReference type="ChEBI" id="CHEBI:30616"/>
    </ligand>
</feature>
<feature type="binding site" evidence="1">
    <location>
        <position position="18"/>
    </location>
    <ligand>
        <name>ADP</name>
        <dbReference type="ChEBI" id="CHEBI:456216"/>
    </ligand>
</feature>
<feature type="binding site" evidence="1">
    <location>
        <position position="84"/>
    </location>
    <ligand>
        <name>glycerol</name>
        <dbReference type="ChEBI" id="CHEBI:17754"/>
    </ligand>
</feature>
<feature type="binding site" evidence="1">
    <location>
        <position position="84"/>
    </location>
    <ligand>
        <name>sn-glycerol 3-phosphate</name>
        <dbReference type="ChEBI" id="CHEBI:57597"/>
    </ligand>
</feature>
<feature type="binding site" evidence="1">
    <location>
        <position position="85"/>
    </location>
    <ligand>
        <name>glycerol</name>
        <dbReference type="ChEBI" id="CHEBI:17754"/>
    </ligand>
</feature>
<feature type="binding site" evidence="1">
    <location>
        <position position="85"/>
    </location>
    <ligand>
        <name>sn-glycerol 3-phosphate</name>
        <dbReference type="ChEBI" id="CHEBI:57597"/>
    </ligand>
</feature>
<feature type="binding site" evidence="1">
    <location>
        <position position="136"/>
    </location>
    <ligand>
        <name>glycerol</name>
        <dbReference type="ChEBI" id="CHEBI:17754"/>
    </ligand>
</feature>
<feature type="binding site" evidence="1">
    <location>
        <position position="136"/>
    </location>
    <ligand>
        <name>sn-glycerol 3-phosphate</name>
        <dbReference type="ChEBI" id="CHEBI:57597"/>
    </ligand>
</feature>
<feature type="binding site" evidence="1">
    <location>
        <position position="246"/>
    </location>
    <ligand>
        <name>glycerol</name>
        <dbReference type="ChEBI" id="CHEBI:17754"/>
    </ligand>
</feature>
<feature type="binding site" evidence="1">
    <location>
        <position position="246"/>
    </location>
    <ligand>
        <name>sn-glycerol 3-phosphate</name>
        <dbReference type="ChEBI" id="CHEBI:57597"/>
    </ligand>
</feature>
<feature type="binding site" evidence="1">
    <location>
        <position position="247"/>
    </location>
    <ligand>
        <name>glycerol</name>
        <dbReference type="ChEBI" id="CHEBI:17754"/>
    </ligand>
</feature>
<feature type="binding site" evidence="1">
    <location>
        <position position="268"/>
    </location>
    <ligand>
        <name>ADP</name>
        <dbReference type="ChEBI" id="CHEBI:456216"/>
    </ligand>
</feature>
<feature type="binding site" evidence="1">
    <location>
        <position position="268"/>
    </location>
    <ligand>
        <name>ATP</name>
        <dbReference type="ChEBI" id="CHEBI:30616"/>
    </ligand>
</feature>
<feature type="binding site" evidence="1">
    <location>
        <position position="311"/>
    </location>
    <ligand>
        <name>ADP</name>
        <dbReference type="ChEBI" id="CHEBI:456216"/>
    </ligand>
</feature>
<feature type="binding site" evidence="1">
    <location>
        <position position="311"/>
    </location>
    <ligand>
        <name>ATP</name>
        <dbReference type="ChEBI" id="CHEBI:30616"/>
    </ligand>
</feature>
<feature type="binding site" evidence="1">
    <location>
        <position position="315"/>
    </location>
    <ligand>
        <name>ATP</name>
        <dbReference type="ChEBI" id="CHEBI:30616"/>
    </ligand>
</feature>
<feature type="binding site" evidence="1">
    <location>
        <position position="412"/>
    </location>
    <ligand>
        <name>ADP</name>
        <dbReference type="ChEBI" id="CHEBI:456216"/>
    </ligand>
</feature>
<feature type="binding site" evidence="1">
    <location>
        <position position="412"/>
    </location>
    <ligand>
        <name>ATP</name>
        <dbReference type="ChEBI" id="CHEBI:30616"/>
    </ligand>
</feature>
<feature type="binding site" evidence="1">
    <location>
        <position position="416"/>
    </location>
    <ligand>
        <name>ADP</name>
        <dbReference type="ChEBI" id="CHEBI:456216"/>
    </ligand>
</feature>
<feature type="modified residue" description="Phosphohistidine; by HPr" evidence="1">
    <location>
        <position position="232"/>
    </location>
</feature>
<name>GLPK_STRPS</name>
<reference key="1">
    <citation type="journal article" date="2009" name="BMC Genomics">
        <title>Genome evolution driven by host adaptations results in a more virulent and antimicrobial-resistant Streptococcus pneumoniae serotype 14.</title>
        <authorList>
            <person name="Ding F."/>
            <person name="Tang P."/>
            <person name="Hsu M.-H."/>
            <person name="Cui P."/>
            <person name="Hu S."/>
            <person name="Yu J."/>
            <person name="Chiu C.-H."/>
        </authorList>
    </citation>
    <scope>NUCLEOTIDE SEQUENCE [LARGE SCALE GENOMIC DNA]</scope>
    <source>
        <strain>CGSP14</strain>
    </source>
</reference>
<accession>B2INK5</accession>
<sequence>MSQEKYIMAIDQGTTSSRAIIFNKKGEKVSSSQKEFTQIFPQAGWVEHNANEIWNSVQSVIAGAFIESGVKPNQIEAIGITNQRETTVVWDKKTGLPIYNAIVWQSRQTAPLAEQLKSQGYVEKFHEKTGLIIDAYFSATKVRWILDHVEGAQERAEKGELLFGTIDTWLVWKLTDGAAHVTDYSNAARTMLYNIKELKWDDEILEILNIPKAILPEVRSNSEIYGKTAPFHFYGGEVPISGMAGDQQAALFGQLAFEPGMVKNTYGTGSFIIMNTGEEMQLSENNLLTTIGYGINGKVYYALEGSIFIAGSAIQWLRDGLRMVENSPESEKYARDSHNNDEVYVVPAFTGLGAPYWNQNARGSVFGLTRGTSKEDFIKATLQSIAYQVRDIIDTMQVDTQTAIQVLKVDGGAAMNNFLMQFQADILGIDIARAKNLETTALGAAFLAGLSVGYWKDLDELKLLNETGELFEPSMNESRKEQLYKGWKKAVKATQVFAEVDD</sequence>